<accession>Q9RAJ1</accession>
<evidence type="ECO:0000255" key="1">
    <source>
        <dbReference type="PROSITE-ProRule" id="PRU00335"/>
    </source>
</evidence>
<protein>
    <recommendedName>
        <fullName>HTH-type transcriptional repressor DhaR</fullName>
    </recommendedName>
</protein>
<keyword id="KW-0238">DNA-binding</keyword>
<keyword id="KW-0678">Repressor</keyword>
<keyword id="KW-0804">Transcription</keyword>
<keyword id="KW-0805">Transcription regulation</keyword>
<reference key="1">
    <citation type="journal article" date="2000" name="J. Bacteriol.">
        <title>Roles of horizontal gene transfer and gene integration in evolution of 1,3-dichloropropene- and 1,2-dibromoethane-degradative pathways.</title>
        <authorList>
            <person name="Poelarends G.J."/>
            <person name="Kulakov L.A."/>
            <person name="Larkin M.J."/>
            <person name="van Hylckama Vlieg J.E.T."/>
            <person name="Janssen D.B."/>
        </authorList>
    </citation>
    <scope>NUCLEOTIDE SEQUENCE [GENOMIC DNA]</scope>
</reference>
<sequence length="198" mass="22239">MARTPVRQHLVEKGTQVFLERGYSGSAVQDITAAAEVPKGSFYNHFESKEAFGGQVLQEFFSDLQRTISSTLEDASVPPVRRLQNYFAAIIETLDGQGCLIGNFSVELSPLSDVVRTELLRIFEQWVKPFQKCIIEGQETGSIRRDLAPDLLADFLIASWQGAILRMKIERNREPLDQFLTVVFEALLPSTENISNES</sequence>
<feature type="chain" id="PRO_0000070595" description="HTH-type transcriptional repressor DhaR">
    <location>
        <begin position="1"/>
        <end position="198"/>
    </location>
</feature>
<feature type="domain" description="HTH tetR-type" evidence="1">
    <location>
        <begin position="4"/>
        <end position="64"/>
    </location>
</feature>
<gene>
    <name type="primary">dhaR</name>
</gene>
<organism>
    <name type="scientific">Mycobacterium sp. (strain GP1)</name>
    <dbReference type="NCBI Taxonomy" id="106323"/>
    <lineage>
        <taxon>Bacteria</taxon>
        <taxon>Bacillati</taxon>
        <taxon>Actinomycetota</taxon>
        <taxon>Actinomycetes</taxon>
        <taxon>Mycobacteriales</taxon>
        <taxon>Mycobacteriaceae</taxon>
        <taxon>Mycobacterium</taxon>
    </lineage>
</organism>
<proteinExistence type="predicted"/>
<comment type="function">
    <text>Transcriptional repressor for the dhaA haloalkane dehalogenase gene.</text>
</comment>
<dbReference type="EMBL" id="AJ250372">
    <property type="protein sequence ID" value="CAB65288.1"/>
    <property type="molecule type" value="Genomic_DNA"/>
</dbReference>
<dbReference type="SMR" id="Q9RAJ1"/>
<dbReference type="GO" id="GO:0003677">
    <property type="term" value="F:DNA binding"/>
    <property type="evidence" value="ECO:0007669"/>
    <property type="project" value="UniProtKB-KW"/>
</dbReference>
<dbReference type="Gene3D" id="1.10.357.10">
    <property type="entry name" value="Tetracycline Repressor, domain 2"/>
    <property type="match status" value="1"/>
</dbReference>
<dbReference type="InterPro" id="IPR009057">
    <property type="entry name" value="Homeodomain-like_sf"/>
</dbReference>
<dbReference type="InterPro" id="IPR001647">
    <property type="entry name" value="HTH_TetR"/>
</dbReference>
<dbReference type="InterPro" id="IPR036271">
    <property type="entry name" value="Tet_transcr_reg_TetR-rel_C_sf"/>
</dbReference>
<dbReference type="InterPro" id="IPR011075">
    <property type="entry name" value="TetR_C"/>
</dbReference>
<dbReference type="PANTHER" id="PTHR47506:SF6">
    <property type="entry name" value="HTH-TYPE TRANSCRIPTIONAL REPRESSOR NEMR"/>
    <property type="match status" value="1"/>
</dbReference>
<dbReference type="PANTHER" id="PTHR47506">
    <property type="entry name" value="TRANSCRIPTIONAL REGULATORY PROTEIN"/>
    <property type="match status" value="1"/>
</dbReference>
<dbReference type="Pfam" id="PF16925">
    <property type="entry name" value="TetR_C_13"/>
    <property type="match status" value="1"/>
</dbReference>
<dbReference type="Pfam" id="PF00440">
    <property type="entry name" value="TetR_N"/>
    <property type="match status" value="1"/>
</dbReference>
<dbReference type="PRINTS" id="PR00455">
    <property type="entry name" value="HTHTETR"/>
</dbReference>
<dbReference type="SUPFAM" id="SSF46689">
    <property type="entry name" value="Homeodomain-like"/>
    <property type="match status" value="1"/>
</dbReference>
<dbReference type="SUPFAM" id="SSF48498">
    <property type="entry name" value="Tetracyclin repressor-like, C-terminal domain"/>
    <property type="match status" value="1"/>
</dbReference>
<dbReference type="PROSITE" id="PS50977">
    <property type="entry name" value="HTH_TETR_2"/>
    <property type="match status" value="1"/>
</dbReference>
<name>DHAR_MYCSX</name>